<feature type="signal peptide" evidence="1">
    <location>
        <begin position="1"/>
        <end position="19"/>
    </location>
</feature>
<feature type="chain" id="PRO_0000021021" description="Curli production assembly/transport component CsgF">
    <location>
        <begin position="20"/>
        <end position="138"/>
    </location>
</feature>
<keyword id="KW-1185">Reference proteome</keyword>
<keyword id="KW-0732">Signal</keyword>
<gene>
    <name type="primary">csgF</name>
    <name type="ordered locus">STM1140</name>
</gene>
<name>CSGF_SALTY</name>
<reference key="1">
    <citation type="journal article" date="1998" name="J. Bacteriol.">
        <title>Curli fibers are highly conserved between Salmonella typhimurium and Escherichia coli with respect to operon structure and regulation.</title>
        <authorList>
            <person name="Romling U."/>
            <person name="Bian Z."/>
            <person name="Hammar M."/>
            <person name="Sierralta W.D."/>
            <person name="Normark S."/>
        </authorList>
    </citation>
    <scope>NUCLEOTIDE SEQUENCE [GENOMIC DNA]</scope>
    <source>
        <strain>SR-11</strain>
    </source>
</reference>
<reference key="2">
    <citation type="journal article" date="2001" name="Nature">
        <title>Complete genome sequence of Salmonella enterica serovar Typhimurium LT2.</title>
        <authorList>
            <person name="McClelland M."/>
            <person name="Sanderson K.E."/>
            <person name="Spieth J."/>
            <person name="Clifton S.W."/>
            <person name="Latreille P."/>
            <person name="Courtney L."/>
            <person name="Porwollik S."/>
            <person name="Ali J."/>
            <person name="Dante M."/>
            <person name="Du F."/>
            <person name="Hou S."/>
            <person name="Layman D."/>
            <person name="Leonard S."/>
            <person name="Nguyen C."/>
            <person name="Scott K."/>
            <person name="Holmes A."/>
            <person name="Grewal N."/>
            <person name="Mulvaney E."/>
            <person name="Ryan E."/>
            <person name="Sun H."/>
            <person name="Florea L."/>
            <person name="Miller W."/>
            <person name="Stoneking T."/>
            <person name="Nhan M."/>
            <person name="Waterston R."/>
            <person name="Wilson R.K."/>
        </authorList>
    </citation>
    <scope>NUCLEOTIDE SEQUENCE [LARGE SCALE GENOMIC DNA]</scope>
    <source>
        <strain>LT2 / SGSC1412 / ATCC 700720</strain>
    </source>
</reference>
<organism>
    <name type="scientific">Salmonella typhimurium (strain LT2 / SGSC1412 / ATCC 700720)</name>
    <dbReference type="NCBI Taxonomy" id="99287"/>
    <lineage>
        <taxon>Bacteria</taxon>
        <taxon>Pseudomonadati</taxon>
        <taxon>Pseudomonadota</taxon>
        <taxon>Gammaproteobacteria</taxon>
        <taxon>Enterobacterales</taxon>
        <taxon>Enterobacteriaceae</taxon>
        <taxon>Salmonella</taxon>
    </lineage>
</organism>
<protein>
    <recommendedName>
        <fullName>Curli production assembly/transport component CsgF</fullName>
    </recommendedName>
</protein>
<sequence>MRVKHAVVLLMLFSPLTWAGNMTFQFRNPNFGGNPNNGSFLLNSAQAQNSYKDPAYDNDFGIETPSALDNFTQAIQSQILGGLLTNINTGKPGRMVTNDFIIDIANRDGQLQLNVTDRKTGRTSTIEVSGLQTQSTDF</sequence>
<evidence type="ECO:0000255" key="1"/>
<accession>P0A202</accession>
<accession>O54292</accession>
<comment type="function">
    <text>May be involved in the biogenesis of curli organelles.</text>
</comment>
<dbReference type="EMBL" id="AJ002301">
    <property type="protein sequence ID" value="CAA05313.1"/>
    <property type="molecule type" value="Genomic_DNA"/>
</dbReference>
<dbReference type="EMBL" id="AE006468">
    <property type="protein sequence ID" value="AAL20070.1"/>
    <property type="molecule type" value="Genomic_DNA"/>
</dbReference>
<dbReference type="RefSeq" id="NP_460111.1">
    <property type="nucleotide sequence ID" value="NC_003197.2"/>
</dbReference>
<dbReference type="RefSeq" id="WP_001264073.1">
    <property type="nucleotide sequence ID" value="NC_003197.2"/>
</dbReference>
<dbReference type="SMR" id="P0A202"/>
<dbReference type="STRING" id="99287.STM1140"/>
<dbReference type="PaxDb" id="99287-STM1140"/>
<dbReference type="GeneID" id="1252658"/>
<dbReference type="KEGG" id="stm:STM1140"/>
<dbReference type="PATRIC" id="fig|99287.12.peg.1207"/>
<dbReference type="HOGENOM" id="CLU_136740_0_0_6"/>
<dbReference type="OMA" id="TFNYQWL"/>
<dbReference type="PhylomeDB" id="P0A202"/>
<dbReference type="BioCyc" id="SENT99287:STM1140-MONOMER"/>
<dbReference type="Proteomes" id="UP000001014">
    <property type="component" value="Chromosome"/>
</dbReference>
<dbReference type="InterPro" id="IPR018893">
    <property type="entry name" value="T8SS_CsgF"/>
</dbReference>
<dbReference type="NCBIfam" id="NF007469">
    <property type="entry name" value="PRK10050.1"/>
    <property type="match status" value="1"/>
</dbReference>
<dbReference type="Pfam" id="PF10614">
    <property type="entry name" value="CsgF"/>
    <property type="match status" value="1"/>
</dbReference>
<proteinExistence type="inferred from homology"/>